<feature type="chain" id="PRO_1000077329" description="Methionyl-tRNA formyltransferase">
    <location>
        <begin position="1"/>
        <end position="314"/>
    </location>
</feature>
<feature type="binding site" evidence="1">
    <location>
        <begin position="109"/>
        <end position="112"/>
    </location>
    <ligand>
        <name>(6S)-5,6,7,8-tetrahydrofolate</name>
        <dbReference type="ChEBI" id="CHEBI:57453"/>
    </ligand>
</feature>
<gene>
    <name evidence="1" type="primary">fmt</name>
    <name type="ordered locus">Swol_1231</name>
</gene>
<sequence>MRIVFMGTSHFAIPSLKALIASEHEIAGVVSQPDKQRGRGRKVTPTPVKEIAEQYKLELLQTANIKTPESIKRIKQWKPELIIVVSYGQIIPLSILEYPRHGCINVHASLLPRYRGAAPVQRALMDGIKSSGITIMFMDEGLDTGDIIMQEAIAVDDNINHGELEKILADMGADLLLQVVDRLVQGEKLPRVVQDDSQASYAARISKEDEIINWSEPAYAIHNRIRALNPQPGAYSYINGTKVKIFASKVRSEAGSGVIAEVIEVDKNTFQVQTGEGILEVLEIQKAGKKRMPTSEFLKGFTLHPGVLLGSKEG</sequence>
<reference key="1">
    <citation type="journal article" date="2010" name="Environ. Microbiol.">
        <title>The genome of Syntrophomonas wolfei: new insights into syntrophic metabolism and biohydrogen production.</title>
        <authorList>
            <person name="Sieber J.R."/>
            <person name="Sims D.R."/>
            <person name="Han C."/>
            <person name="Kim E."/>
            <person name="Lykidis A."/>
            <person name="Lapidus A.L."/>
            <person name="McDonnald E."/>
            <person name="Rohlin L."/>
            <person name="Culley D.E."/>
            <person name="Gunsalus R."/>
            <person name="McInerney M.J."/>
        </authorList>
    </citation>
    <scope>NUCLEOTIDE SEQUENCE [LARGE SCALE GENOMIC DNA]</scope>
    <source>
        <strain>DSM 2245B / Goettingen</strain>
    </source>
</reference>
<dbReference type="EC" id="2.1.2.9" evidence="1"/>
<dbReference type="EMBL" id="CP000448">
    <property type="protein sequence ID" value="ABI68540.1"/>
    <property type="molecule type" value="Genomic_DNA"/>
</dbReference>
<dbReference type="RefSeq" id="WP_011640643.1">
    <property type="nucleotide sequence ID" value="NC_008346.1"/>
</dbReference>
<dbReference type="SMR" id="Q0AXL4"/>
<dbReference type="STRING" id="335541.Swol_1231"/>
<dbReference type="KEGG" id="swo:Swol_1231"/>
<dbReference type="eggNOG" id="COG0223">
    <property type="taxonomic scope" value="Bacteria"/>
</dbReference>
<dbReference type="HOGENOM" id="CLU_033347_1_1_9"/>
<dbReference type="OrthoDB" id="9802815at2"/>
<dbReference type="Proteomes" id="UP000001968">
    <property type="component" value="Chromosome"/>
</dbReference>
<dbReference type="GO" id="GO:0005829">
    <property type="term" value="C:cytosol"/>
    <property type="evidence" value="ECO:0007669"/>
    <property type="project" value="TreeGrafter"/>
</dbReference>
<dbReference type="GO" id="GO:0004479">
    <property type="term" value="F:methionyl-tRNA formyltransferase activity"/>
    <property type="evidence" value="ECO:0007669"/>
    <property type="project" value="UniProtKB-UniRule"/>
</dbReference>
<dbReference type="CDD" id="cd08646">
    <property type="entry name" value="FMT_core_Met-tRNA-FMT_N"/>
    <property type="match status" value="1"/>
</dbReference>
<dbReference type="CDD" id="cd08704">
    <property type="entry name" value="Met_tRNA_FMT_C"/>
    <property type="match status" value="1"/>
</dbReference>
<dbReference type="FunFam" id="3.40.50.12230:FF:000001">
    <property type="entry name" value="Methionyl-tRNA formyltransferase"/>
    <property type="match status" value="1"/>
</dbReference>
<dbReference type="Gene3D" id="3.40.50.12230">
    <property type="match status" value="1"/>
</dbReference>
<dbReference type="HAMAP" id="MF_00182">
    <property type="entry name" value="Formyl_trans"/>
    <property type="match status" value="1"/>
</dbReference>
<dbReference type="InterPro" id="IPR005794">
    <property type="entry name" value="Fmt"/>
</dbReference>
<dbReference type="InterPro" id="IPR005793">
    <property type="entry name" value="Formyl_trans_C"/>
</dbReference>
<dbReference type="InterPro" id="IPR002376">
    <property type="entry name" value="Formyl_transf_N"/>
</dbReference>
<dbReference type="InterPro" id="IPR036477">
    <property type="entry name" value="Formyl_transf_N_sf"/>
</dbReference>
<dbReference type="InterPro" id="IPR011034">
    <property type="entry name" value="Formyl_transferase-like_C_sf"/>
</dbReference>
<dbReference type="InterPro" id="IPR001555">
    <property type="entry name" value="GART_AS"/>
</dbReference>
<dbReference type="InterPro" id="IPR044135">
    <property type="entry name" value="Met-tRNA-FMT_C"/>
</dbReference>
<dbReference type="InterPro" id="IPR041711">
    <property type="entry name" value="Met-tRNA-FMT_N"/>
</dbReference>
<dbReference type="NCBIfam" id="TIGR00460">
    <property type="entry name" value="fmt"/>
    <property type="match status" value="1"/>
</dbReference>
<dbReference type="PANTHER" id="PTHR11138">
    <property type="entry name" value="METHIONYL-TRNA FORMYLTRANSFERASE"/>
    <property type="match status" value="1"/>
</dbReference>
<dbReference type="PANTHER" id="PTHR11138:SF5">
    <property type="entry name" value="METHIONYL-TRNA FORMYLTRANSFERASE, MITOCHONDRIAL"/>
    <property type="match status" value="1"/>
</dbReference>
<dbReference type="Pfam" id="PF02911">
    <property type="entry name" value="Formyl_trans_C"/>
    <property type="match status" value="1"/>
</dbReference>
<dbReference type="Pfam" id="PF00551">
    <property type="entry name" value="Formyl_trans_N"/>
    <property type="match status" value="1"/>
</dbReference>
<dbReference type="SUPFAM" id="SSF50486">
    <property type="entry name" value="FMT C-terminal domain-like"/>
    <property type="match status" value="1"/>
</dbReference>
<dbReference type="SUPFAM" id="SSF53328">
    <property type="entry name" value="Formyltransferase"/>
    <property type="match status" value="1"/>
</dbReference>
<dbReference type="PROSITE" id="PS00373">
    <property type="entry name" value="GART"/>
    <property type="match status" value="1"/>
</dbReference>
<name>FMT_SYNWW</name>
<proteinExistence type="inferred from homology"/>
<accession>Q0AXL4</accession>
<keyword id="KW-0648">Protein biosynthesis</keyword>
<keyword id="KW-1185">Reference proteome</keyword>
<keyword id="KW-0808">Transferase</keyword>
<organism>
    <name type="scientific">Syntrophomonas wolfei subsp. wolfei (strain DSM 2245B / Goettingen)</name>
    <dbReference type="NCBI Taxonomy" id="335541"/>
    <lineage>
        <taxon>Bacteria</taxon>
        <taxon>Bacillati</taxon>
        <taxon>Bacillota</taxon>
        <taxon>Clostridia</taxon>
        <taxon>Eubacteriales</taxon>
        <taxon>Syntrophomonadaceae</taxon>
        <taxon>Syntrophomonas</taxon>
    </lineage>
</organism>
<comment type="function">
    <text evidence="1">Attaches a formyl group to the free amino group of methionyl-tRNA(fMet). The formyl group appears to play a dual role in the initiator identity of N-formylmethionyl-tRNA by promoting its recognition by IF2 and preventing the misappropriation of this tRNA by the elongation apparatus.</text>
</comment>
<comment type="catalytic activity">
    <reaction evidence="1">
        <text>L-methionyl-tRNA(fMet) + (6R)-10-formyltetrahydrofolate = N-formyl-L-methionyl-tRNA(fMet) + (6S)-5,6,7,8-tetrahydrofolate + H(+)</text>
        <dbReference type="Rhea" id="RHEA:24380"/>
        <dbReference type="Rhea" id="RHEA-COMP:9952"/>
        <dbReference type="Rhea" id="RHEA-COMP:9953"/>
        <dbReference type="ChEBI" id="CHEBI:15378"/>
        <dbReference type="ChEBI" id="CHEBI:57453"/>
        <dbReference type="ChEBI" id="CHEBI:78530"/>
        <dbReference type="ChEBI" id="CHEBI:78844"/>
        <dbReference type="ChEBI" id="CHEBI:195366"/>
        <dbReference type="EC" id="2.1.2.9"/>
    </reaction>
</comment>
<comment type="similarity">
    <text evidence="1">Belongs to the Fmt family.</text>
</comment>
<evidence type="ECO:0000255" key="1">
    <source>
        <dbReference type="HAMAP-Rule" id="MF_00182"/>
    </source>
</evidence>
<protein>
    <recommendedName>
        <fullName evidence="1">Methionyl-tRNA formyltransferase</fullName>
        <ecNumber evidence="1">2.1.2.9</ecNumber>
    </recommendedName>
</protein>